<reference key="1">
    <citation type="journal article" date="2003" name="J. Mol. Evol.">
        <title>The evolution of parasite recognition genes in the innate immune system: purifying selection on Drosophila melanogaster peptidoglycan recognition proteins.</title>
        <authorList>
            <person name="Jiggins F.M."/>
            <person name="Hurst G.D.D."/>
        </authorList>
    </citation>
    <scope>NUCLEOTIDE SEQUENCE [GENOMIC DNA]</scope>
    <source>
        <strain>DI7</strain>
        <strain>Draveil</strain>
        <strain>KY024</strain>
        <strain>KY038</strain>
        <strain>Loua</strain>
        <strain>Monty5</strain>
        <strain>P.bourg</strain>
        <strain>S30</strain>
        <strain>Tahiti</strain>
        <strain>Texas</strain>
        <strain>ZW141</strain>
    </source>
</reference>
<reference key="2">
    <citation type="journal article" date="2000" name="Science">
        <title>The genome sequence of Drosophila melanogaster.</title>
        <authorList>
            <person name="Adams M.D."/>
            <person name="Celniker S.E."/>
            <person name="Holt R.A."/>
            <person name="Evans C.A."/>
            <person name="Gocayne J.D."/>
            <person name="Amanatides P.G."/>
            <person name="Scherer S.E."/>
            <person name="Li P.W."/>
            <person name="Hoskins R.A."/>
            <person name="Galle R.F."/>
            <person name="George R.A."/>
            <person name="Lewis S.E."/>
            <person name="Richards S."/>
            <person name="Ashburner M."/>
            <person name="Henderson S.N."/>
            <person name="Sutton G.G."/>
            <person name="Wortman J.R."/>
            <person name="Yandell M.D."/>
            <person name="Zhang Q."/>
            <person name="Chen L.X."/>
            <person name="Brandon R.C."/>
            <person name="Rogers Y.-H.C."/>
            <person name="Blazej R.G."/>
            <person name="Champe M."/>
            <person name="Pfeiffer B.D."/>
            <person name="Wan K.H."/>
            <person name="Doyle C."/>
            <person name="Baxter E.G."/>
            <person name="Helt G."/>
            <person name="Nelson C.R."/>
            <person name="Miklos G.L.G."/>
            <person name="Abril J.F."/>
            <person name="Agbayani A."/>
            <person name="An H.-J."/>
            <person name="Andrews-Pfannkoch C."/>
            <person name="Baldwin D."/>
            <person name="Ballew R.M."/>
            <person name="Basu A."/>
            <person name="Baxendale J."/>
            <person name="Bayraktaroglu L."/>
            <person name="Beasley E.M."/>
            <person name="Beeson K.Y."/>
            <person name="Benos P.V."/>
            <person name="Berman B.P."/>
            <person name="Bhandari D."/>
            <person name="Bolshakov S."/>
            <person name="Borkova D."/>
            <person name="Botchan M.R."/>
            <person name="Bouck J."/>
            <person name="Brokstein P."/>
            <person name="Brottier P."/>
            <person name="Burtis K.C."/>
            <person name="Busam D.A."/>
            <person name="Butler H."/>
            <person name="Cadieu E."/>
            <person name="Center A."/>
            <person name="Chandra I."/>
            <person name="Cherry J.M."/>
            <person name="Cawley S."/>
            <person name="Dahlke C."/>
            <person name="Davenport L.B."/>
            <person name="Davies P."/>
            <person name="de Pablos B."/>
            <person name="Delcher A."/>
            <person name="Deng Z."/>
            <person name="Mays A.D."/>
            <person name="Dew I."/>
            <person name="Dietz S.M."/>
            <person name="Dodson K."/>
            <person name="Doup L.E."/>
            <person name="Downes M."/>
            <person name="Dugan-Rocha S."/>
            <person name="Dunkov B.C."/>
            <person name="Dunn P."/>
            <person name="Durbin K.J."/>
            <person name="Evangelista C.C."/>
            <person name="Ferraz C."/>
            <person name="Ferriera S."/>
            <person name="Fleischmann W."/>
            <person name="Fosler C."/>
            <person name="Gabrielian A.E."/>
            <person name="Garg N.S."/>
            <person name="Gelbart W.M."/>
            <person name="Glasser K."/>
            <person name="Glodek A."/>
            <person name="Gong F."/>
            <person name="Gorrell J.H."/>
            <person name="Gu Z."/>
            <person name="Guan P."/>
            <person name="Harris M."/>
            <person name="Harris N.L."/>
            <person name="Harvey D.A."/>
            <person name="Heiman T.J."/>
            <person name="Hernandez J.R."/>
            <person name="Houck J."/>
            <person name="Hostin D."/>
            <person name="Houston K.A."/>
            <person name="Howland T.J."/>
            <person name="Wei M.-H."/>
            <person name="Ibegwam C."/>
            <person name="Jalali M."/>
            <person name="Kalush F."/>
            <person name="Karpen G.H."/>
            <person name="Ke Z."/>
            <person name="Kennison J.A."/>
            <person name="Ketchum K.A."/>
            <person name="Kimmel B.E."/>
            <person name="Kodira C.D."/>
            <person name="Kraft C.L."/>
            <person name="Kravitz S."/>
            <person name="Kulp D."/>
            <person name="Lai Z."/>
            <person name="Lasko P."/>
            <person name="Lei Y."/>
            <person name="Levitsky A.A."/>
            <person name="Li J.H."/>
            <person name="Li Z."/>
            <person name="Liang Y."/>
            <person name="Lin X."/>
            <person name="Liu X."/>
            <person name="Mattei B."/>
            <person name="McIntosh T.C."/>
            <person name="McLeod M.P."/>
            <person name="McPherson D."/>
            <person name="Merkulov G."/>
            <person name="Milshina N.V."/>
            <person name="Mobarry C."/>
            <person name="Morris J."/>
            <person name="Moshrefi A."/>
            <person name="Mount S.M."/>
            <person name="Moy M."/>
            <person name="Murphy B."/>
            <person name="Murphy L."/>
            <person name="Muzny D.M."/>
            <person name="Nelson D.L."/>
            <person name="Nelson D.R."/>
            <person name="Nelson K.A."/>
            <person name="Nixon K."/>
            <person name="Nusskern D.R."/>
            <person name="Pacleb J.M."/>
            <person name="Palazzolo M."/>
            <person name="Pittman G.S."/>
            <person name="Pan S."/>
            <person name="Pollard J."/>
            <person name="Puri V."/>
            <person name="Reese M.G."/>
            <person name="Reinert K."/>
            <person name="Remington K."/>
            <person name="Saunders R.D.C."/>
            <person name="Scheeler F."/>
            <person name="Shen H."/>
            <person name="Shue B.C."/>
            <person name="Siden-Kiamos I."/>
            <person name="Simpson M."/>
            <person name="Skupski M.P."/>
            <person name="Smith T.J."/>
            <person name="Spier E."/>
            <person name="Spradling A.C."/>
            <person name="Stapleton M."/>
            <person name="Strong R."/>
            <person name="Sun E."/>
            <person name="Svirskas R."/>
            <person name="Tector C."/>
            <person name="Turner R."/>
            <person name="Venter E."/>
            <person name="Wang A.H."/>
            <person name="Wang X."/>
            <person name="Wang Z.-Y."/>
            <person name="Wassarman D.A."/>
            <person name="Weinstock G.M."/>
            <person name="Weissenbach J."/>
            <person name="Williams S.M."/>
            <person name="Woodage T."/>
            <person name="Worley K.C."/>
            <person name="Wu D."/>
            <person name="Yang S."/>
            <person name="Yao Q.A."/>
            <person name="Ye J."/>
            <person name="Yeh R.-F."/>
            <person name="Zaveri J.S."/>
            <person name="Zhan M."/>
            <person name="Zhang G."/>
            <person name="Zhao Q."/>
            <person name="Zheng L."/>
            <person name="Zheng X.H."/>
            <person name="Zhong F.N."/>
            <person name="Zhong W."/>
            <person name="Zhou X."/>
            <person name="Zhu S.C."/>
            <person name="Zhu X."/>
            <person name="Smith H.O."/>
            <person name="Gibbs R.A."/>
            <person name="Myers E.W."/>
            <person name="Rubin G.M."/>
            <person name="Venter J.C."/>
        </authorList>
    </citation>
    <scope>NUCLEOTIDE SEQUENCE [LARGE SCALE GENOMIC DNA]</scope>
    <source>
        <strain>Berkeley</strain>
    </source>
</reference>
<reference key="3">
    <citation type="journal article" date="2002" name="Genome Biol.">
        <title>Annotation of the Drosophila melanogaster euchromatic genome: a systematic review.</title>
        <authorList>
            <person name="Misra S."/>
            <person name="Crosby M.A."/>
            <person name="Mungall C.J."/>
            <person name="Matthews B.B."/>
            <person name="Campbell K.S."/>
            <person name="Hradecky P."/>
            <person name="Huang Y."/>
            <person name="Kaminker J.S."/>
            <person name="Millburn G.H."/>
            <person name="Prochnik S.E."/>
            <person name="Smith C.D."/>
            <person name="Tupy J.L."/>
            <person name="Whitfield E.J."/>
            <person name="Bayraktaroglu L."/>
            <person name="Berman B.P."/>
            <person name="Bettencourt B.R."/>
            <person name="Celniker S.E."/>
            <person name="de Grey A.D.N.J."/>
            <person name="Drysdale R.A."/>
            <person name="Harris N.L."/>
            <person name="Richter J."/>
            <person name="Russo S."/>
            <person name="Schroeder A.J."/>
            <person name="Shu S.Q."/>
            <person name="Stapleton M."/>
            <person name="Yamada C."/>
            <person name="Ashburner M."/>
            <person name="Gelbart W.M."/>
            <person name="Rubin G.M."/>
            <person name="Lewis S.E."/>
        </authorList>
    </citation>
    <scope>GENOME REANNOTATION</scope>
    <source>
        <strain>Berkeley</strain>
    </source>
</reference>
<reference evidence="6" key="4">
    <citation type="journal article" date="2005" name="Mol. Biol. Evol.">
        <title>Intragenic Hill-Robertson interference influences selection intensity on synonymous mutations in Drosophila.</title>
        <authorList>
            <person name="Comeron J.M."/>
            <person name="Guthrie T.B."/>
        </authorList>
    </citation>
    <scope>NUCLEOTIDE SEQUENCE [GENOMIC DNA] OF 8-179</scope>
    <source>
        <strain evidence="6">Ral1</strain>
    </source>
</reference>
<feature type="signal peptide" evidence="3">
    <location>
        <begin position="1"/>
        <end position="21"/>
    </location>
</feature>
<feature type="chain" id="PRO_0000023910" description="Peptidoglycan-recognition protein SC1a">
    <location>
        <begin position="22"/>
        <end position="185"/>
    </location>
</feature>
<feature type="domain" description="N-acetylmuramoyl-L-alanine amidase" evidence="3">
    <location>
        <begin position="46"/>
        <end position="170"/>
    </location>
</feature>
<feature type="binding site" evidence="2">
    <location>
        <position position="51"/>
    </location>
    <ligand>
        <name>Zn(2+)</name>
        <dbReference type="ChEBI" id="CHEBI:29105"/>
    </ligand>
</feature>
<feature type="binding site" evidence="2">
    <location>
        <position position="160"/>
    </location>
    <ligand>
        <name>Zn(2+)</name>
        <dbReference type="ChEBI" id="CHEBI:29105"/>
    </ligand>
</feature>
<feature type="binding site" evidence="2">
    <location>
        <position position="168"/>
    </location>
    <ligand>
        <name>Zn(2+)</name>
        <dbReference type="ChEBI" id="CHEBI:29105"/>
    </ligand>
</feature>
<feature type="site" description="Essential for zinc hydrate coordination" evidence="2">
    <location>
        <position position="86"/>
    </location>
</feature>
<feature type="disulfide bond" evidence="2">
    <location>
        <begin position="58"/>
        <end position="64"/>
    </location>
</feature>
<feature type="sequence variant" description="In strain: KY024 and KY038.">
    <original>A</original>
    <variation>T</variation>
    <location>
        <position position="6"/>
    </location>
</feature>
<feature type="sequence variant" description="In strain: KY024.">
    <original>V</original>
    <variation>I</variation>
    <location>
        <position position="13"/>
    </location>
</feature>
<comment type="function">
    <text evidence="1">N-acetylmuramyl-L-alanine amidase involved in innate immunity by degrading bacterial peptidoglycans (PGN). Plays a scavenger role by digesting biologically active PGN into biologically inactive fragments. Has no direct bacteriolytic activity.</text>
</comment>
<comment type="catalytic activity">
    <reaction evidence="1">
        <text>Hydrolyzes the link between N-acetylmuramoyl residues and L-amino acid residues in certain cell-wall glycopeptides.</text>
        <dbReference type="EC" id="3.5.1.28"/>
    </reaction>
</comment>
<comment type="cofactor">
    <cofactor evidence="2">
        <name>Zn(2+)</name>
        <dbReference type="ChEBI" id="CHEBI:29105"/>
    </cofactor>
</comment>
<comment type="subcellular location">
    <subcellularLocation>
        <location evidence="5">Secreted</location>
    </subcellularLocation>
</comment>
<comment type="similarity">
    <text evidence="5">Belongs to the N-acetylmuramoyl-L-alanine amidase 2 family.</text>
</comment>
<accession>C0HK98</accession>
<accession>B5RJ78</accession>
<accession>Q2XY86</accession>
<accession>Q70PU9</accession>
<accession>Q70PV0</accession>
<accession>Q95SQ9</accession>
<accession>Q9V3B7</accession>
<gene>
    <name evidence="4 7" type="primary">PGRP-SC1a</name>
    <name evidence="7" type="ORF">CG14746</name>
</gene>
<dbReference type="EC" id="3.5.1.28" evidence="1"/>
<dbReference type="EMBL" id="AE013599">
    <property type="protein sequence ID" value="AAF59054.1"/>
    <property type="molecule type" value="Genomic_DNA"/>
</dbReference>
<dbReference type="EMBL" id="AJ556588">
    <property type="protein sequence ID" value="CAD89153.1"/>
    <property type="molecule type" value="Genomic_DNA"/>
</dbReference>
<dbReference type="EMBL" id="AJ556589">
    <property type="protein sequence ID" value="CAD89154.1"/>
    <property type="molecule type" value="Genomic_DNA"/>
</dbReference>
<dbReference type="EMBL" id="AJ556590">
    <property type="protein sequence ID" value="CAD89155.1"/>
    <property type="molecule type" value="Genomic_DNA"/>
</dbReference>
<dbReference type="EMBL" id="AJ556591">
    <property type="protein sequence ID" value="CAD89156.1"/>
    <property type="molecule type" value="Genomic_DNA"/>
</dbReference>
<dbReference type="EMBL" id="AJ556592">
    <property type="protein sequence ID" value="CAD89157.1"/>
    <property type="molecule type" value="Genomic_DNA"/>
</dbReference>
<dbReference type="EMBL" id="AJ556593">
    <property type="protein sequence ID" value="CAD89158.1"/>
    <property type="molecule type" value="Genomic_DNA"/>
</dbReference>
<dbReference type="EMBL" id="AJ556594">
    <property type="protein sequence ID" value="CAD89159.1"/>
    <property type="molecule type" value="Genomic_DNA"/>
</dbReference>
<dbReference type="EMBL" id="AJ556595">
    <property type="protein sequence ID" value="CAD89160.1"/>
    <property type="molecule type" value="Genomic_DNA"/>
</dbReference>
<dbReference type="EMBL" id="AJ556596">
    <property type="protein sequence ID" value="CAD89161.1"/>
    <property type="molecule type" value="Genomic_DNA"/>
</dbReference>
<dbReference type="EMBL" id="AJ556597">
    <property type="protein sequence ID" value="CAD89162.1"/>
    <property type="molecule type" value="Genomic_DNA"/>
</dbReference>
<dbReference type="EMBL" id="AJ556598">
    <property type="protein sequence ID" value="CAD89163.1"/>
    <property type="molecule type" value="Genomic_DNA"/>
</dbReference>
<dbReference type="EMBL" id="AJ556601">
    <property type="protein sequence ID" value="CAD89166.1"/>
    <property type="molecule type" value="Genomic_DNA"/>
</dbReference>
<dbReference type="EMBL" id="AJ556603">
    <property type="protein sequence ID" value="CAD89168.1"/>
    <property type="molecule type" value="Genomic_DNA"/>
</dbReference>
<dbReference type="EMBL" id="AJ556609">
    <property type="protein sequence ID" value="CAD89174.1"/>
    <property type="molecule type" value="Genomic_DNA"/>
</dbReference>
<dbReference type="EMBL" id="DQ138758">
    <property type="protein sequence ID" value="ABA86364.1"/>
    <property type="molecule type" value="Genomic_DNA"/>
</dbReference>
<dbReference type="EMBL" id="DQ138776">
    <property type="protein sequence ID" value="ABA86382.1"/>
    <property type="molecule type" value="Genomic_DNA"/>
</dbReference>
<dbReference type="RefSeq" id="NP_610407.1">
    <property type="nucleotide sequence ID" value="NM_136563.2"/>
</dbReference>
<dbReference type="SMR" id="C0HK98"/>
<dbReference type="FunCoup" id="C0HK98">
    <property type="interactions" value="89"/>
</dbReference>
<dbReference type="STRING" id="7227.FBpp0087786"/>
<dbReference type="PaxDb" id="7227-FBpp0087786"/>
<dbReference type="DNASU" id="35861"/>
<dbReference type="EnsemblMetazoa" id="FBtr0088707">
    <property type="protein sequence ID" value="FBpp0087786"/>
    <property type="gene ID" value="FBgn0043576"/>
</dbReference>
<dbReference type="EnsemblMetazoa" id="FBtr0088708">
    <property type="protein sequence ID" value="FBpp0087787"/>
    <property type="gene ID" value="FBgn0033327"/>
</dbReference>
<dbReference type="EnsemblMetazoa" id="FBtr0339336">
    <property type="protein sequence ID" value="FBpp0308436"/>
    <property type="gene ID" value="FBgn0033327"/>
</dbReference>
<dbReference type="GeneID" id="35859"/>
<dbReference type="KEGG" id="dme:Dmel_CG14746"/>
<dbReference type="KEGG" id="dme:Dmel_CG8577"/>
<dbReference type="UCSC" id="CG14746-RA">
    <property type="organism name" value="d. melanogaster"/>
</dbReference>
<dbReference type="AGR" id="FB:FBgn0033327"/>
<dbReference type="AGR" id="FB:FBgn0043576"/>
<dbReference type="CTD" id="35859"/>
<dbReference type="CTD" id="35861"/>
<dbReference type="FlyBase" id="FBgn0043576">
    <property type="gene designation" value="PGRP-SC1a"/>
</dbReference>
<dbReference type="VEuPathDB" id="VectorBase:FBgn0033327"/>
<dbReference type="VEuPathDB" id="VectorBase:FBgn0043576"/>
<dbReference type="eggNOG" id="ENOG502QR3D">
    <property type="taxonomic scope" value="Eukaryota"/>
</dbReference>
<dbReference type="InParanoid" id="C0HK98"/>
<dbReference type="OMA" id="ICTEGRF"/>
<dbReference type="OrthoDB" id="6151684at2759"/>
<dbReference type="BioGRID-ORCS" id="35859">
    <property type="hits" value="0 hits in 3 CRISPR screens"/>
</dbReference>
<dbReference type="BioGRID-ORCS" id="35861">
    <property type="hits" value="0 hits in 3 CRISPR screens"/>
</dbReference>
<dbReference type="PRO" id="PR:C0HK98"/>
<dbReference type="Proteomes" id="UP000000803">
    <property type="component" value="Chromosome 2R"/>
</dbReference>
<dbReference type="Bgee" id="FBgn0033327">
    <property type="expression patterns" value="Expressed in midgut large flat cell (Drosophila) in digestive tract and 7 other cell types or tissues"/>
</dbReference>
<dbReference type="ExpressionAtlas" id="C0HK98">
    <property type="expression patterns" value="baseline and differential"/>
</dbReference>
<dbReference type="GO" id="GO:0005576">
    <property type="term" value="C:extracellular region"/>
    <property type="evidence" value="ECO:0000303"/>
    <property type="project" value="UniProtKB"/>
</dbReference>
<dbReference type="GO" id="GO:0008745">
    <property type="term" value="F:N-acetylmuramoyl-L-alanine amidase activity"/>
    <property type="evidence" value="ECO:0000250"/>
    <property type="project" value="FlyBase"/>
</dbReference>
<dbReference type="GO" id="GO:0042834">
    <property type="term" value="F:peptidoglycan binding"/>
    <property type="evidence" value="ECO:0007669"/>
    <property type="project" value="InterPro"/>
</dbReference>
<dbReference type="GO" id="GO:0008270">
    <property type="term" value="F:zinc ion binding"/>
    <property type="evidence" value="ECO:0007669"/>
    <property type="project" value="InterPro"/>
</dbReference>
<dbReference type="GO" id="GO:0050830">
    <property type="term" value="P:defense response to Gram-positive bacterium"/>
    <property type="evidence" value="ECO:0000315"/>
    <property type="project" value="FlyBase"/>
</dbReference>
<dbReference type="GO" id="GO:0045087">
    <property type="term" value="P:innate immune response"/>
    <property type="evidence" value="ECO:0000303"/>
    <property type="project" value="UniProtKB"/>
</dbReference>
<dbReference type="GO" id="GO:0002814">
    <property type="term" value="P:negative regulation of biosynthetic process of antibacterial peptides active against Gram-negative bacteria"/>
    <property type="evidence" value="ECO:0000316"/>
    <property type="project" value="FlyBase"/>
</dbReference>
<dbReference type="GO" id="GO:0061060">
    <property type="term" value="P:negative regulation of peptidoglycan recognition protein signaling pathway"/>
    <property type="evidence" value="ECO:0000316"/>
    <property type="project" value="FlyBase"/>
</dbReference>
<dbReference type="GO" id="GO:0009253">
    <property type="term" value="P:peptidoglycan catabolic process"/>
    <property type="evidence" value="ECO:0000250"/>
    <property type="project" value="FlyBase"/>
</dbReference>
<dbReference type="GO" id="GO:0050766">
    <property type="term" value="P:positive regulation of phagocytosis"/>
    <property type="evidence" value="ECO:0000315"/>
    <property type="project" value="FlyBase"/>
</dbReference>
<dbReference type="GO" id="GO:0160032">
    <property type="term" value="P:Toll receptor ligand protein activation cascade"/>
    <property type="evidence" value="ECO:0000315"/>
    <property type="project" value="FlyBase"/>
</dbReference>
<dbReference type="CDD" id="cd06583">
    <property type="entry name" value="PGRP"/>
    <property type="match status" value="1"/>
</dbReference>
<dbReference type="FunFam" id="3.40.80.10:FF:000001">
    <property type="entry name" value="Peptidoglycan recognition protein 1"/>
    <property type="match status" value="1"/>
</dbReference>
<dbReference type="Gene3D" id="3.40.80.10">
    <property type="entry name" value="Peptidoglycan recognition protein-like"/>
    <property type="match status" value="1"/>
</dbReference>
<dbReference type="InterPro" id="IPR036505">
    <property type="entry name" value="Amidase/PGRP_sf"/>
</dbReference>
<dbReference type="InterPro" id="IPR002502">
    <property type="entry name" value="Amidase_domain"/>
</dbReference>
<dbReference type="InterPro" id="IPR017331">
    <property type="entry name" value="Peptidoglycan_recognition"/>
</dbReference>
<dbReference type="InterPro" id="IPR015510">
    <property type="entry name" value="PGRP"/>
</dbReference>
<dbReference type="InterPro" id="IPR006619">
    <property type="entry name" value="PGRP_domain_met/bac"/>
</dbReference>
<dbReference type="PANTHER" id="PTHR11022">
    <property type="entry name" value="PEPTIDOGLYCAN RECOGNITION PROTEIN"/>
    <property type="match status" value="1"/>
</dbReference>
<dbReference type="PANTHER" id="PTHR11022:SF75">
    <property type="entry name" value="PEPTIDOGLYCAN-RECOGNITION PROTEIN SB1-RELATED"/>
    <property type="match status" value="1"/>
</dbReference>
<dbReference type="Pfam" id="PF01510">
    <property type="entry name" value="Amidase_2"/>
    <property type="match status" value="1"/>
</dbReference>
<dbReference type="PIRSF" id="PIRSF037945">
    <property type="entry name" value="PGRPs"/>
    <property type="match status" value="1"/>
</dbReference>
<dbReference type="SMART" id="SM00644">
    <property type="entry name" value="Ami_2"/>
    <property type="match status" value="1"/>
</dbReference>
<dbReference type="SMART" id="SM00701">
    <property type="entry name" value="PGRP"/>
    <property type="match status" value="1"/>
</dbReference>
<dbReference type="SUPFAM" id="SSF55846">
    <property type="entry name" value="N-acetylmuramoyl-L-alanine amidase-like"/>
    <property type="match status" value="1"/>
</dbReference>
<organism>
    <name type="scientific">Drosophila melanogaster</name>
    <name type="common">Fruit fly</name>
    <dbReference type="NCBI Taxonomy" id="7227"/>
    <lineage>
        <taxon>Eukaryota</taxon>
        <taxon>Metazoa</taxon>
        <taxon>Ecdysozoa</taxon>
        <taxon>Arthropoda</taxon>
        <taxon>Hexapoda</taxon>
        <taxon>Insecta</taxon>
        <taxon>Pterygota</taxon>
        <taxon>Neoptera</taxon>
        <taxon>Endopterygota</taxon>
        <taxon>Diptera</taxon>
        <taxon>Brachycera</taxon>
        <taxon>Muscomorpha</taxon>
        <taxon>Ephydroidea</taxon>
        <taxon>Drosophilidae</taxon>
        <taxon>Drosophila</taxon>
        <taxon>Sophophora</taxon>
    </lineage>
</organism>
<sequence>MVSKVALLLAVLVCSQYMAQGVYVVSKAEWGGRGAKWTVGLGNYLSYAIIHHTAGSYCETRAQCNAVLQSVQNYHMDSLGWPDIGYNFLIGGDGNVYEGRGWNNMGAHAAEWNPYSIGISFLGNYNWDTLEPNMISAAQQLLNDAVNRGQLSSGYILYGHRQVSATECPGTHIWNEIRGWSHWSG</sequence>
<proteinExistence type="inferred from homology"/>
<protein>
    <recommendedName>
        <fullName evidence="4">Peptidoglycan-recognition protein SC1a</fullName>
        <ecNumber evidence="1">3.5.1.28</ecNumber>
    </recommendedName>
</protein>
<evidence type="ECO:0000250" key="1">
    <source>
        <dbReference type="UniProtKB" id="C0HK99"/>
    </source>
</evidence>
<evidence type="ECO:0000250" key="2">
    <source>
        <dbReference type="UniProtKB" id="Q8INK6"/>
    </source>
</evidence>
<evidence type="ECO:0000255" key="3"/>
<evidence type="ECO:0000303" key="4">
    <source>
    </source>
</evidence>
<evidence type="ECO:0000305" key="5"/>
<evidence type="ECO:0000312" key="6">
    <source>
        <dbReference type="EMBL" id="ABA86382.1"/>
    </source>
</evidence>
<evidence type="ECO:0000312" key="7">
    <source>
        <dbReference type="FlyBase" id="FBgn0043576"/>
    </source>
</evidence>
<keyword id="KW-1015">Disulfide bond</keyword>
<keyword id="KW-0378">Hydrolase</keyword>
<keyword id="KW-0391">Immunity</keyword>
<keyword id="KW-0399">Innate immunity</keyword>
<keyword id="KW-0479">Metal-binding</keyword>
<keyword id="KW-1185">Reference proteome</keyword>
<keyword id="KW-0964">Secreted</keyword>
<keyword id="KW-0732">Signal</keyword>
<keyword id="KW-0862">Zinc</keyword>
<name>SC1A_DROME</name>